<proteinExistence type="inferred from homology"/>
<evidence type="ECO:0000255" key="1">
    <source>
        <dbReference type="HAMAP-Rule" id="MF_00204"/>
    </source>
</evidence>
<name>UVRB_PASMU</name>
<sequence length="678" mass="77402">MAYKMHTKSFILHSDFSPSGDQPQAITQLIEGLENGLAHQTLLGVTGSGKTFTIANVIAKLNRPAMVLAPNKTLAAQLYAEMKAFFPENAVEYFVSYYDYYQPEAYVPSSDTFIEKDASINDQIEQMRLSATKSFLERRDTIVVASVSAIYGLGDPDSYLKMMLHLQTGAIINQRQILAQLAELQYTRNDQAFERGTFRVRGEIIDIFPAESDDKAIRIELFDDEIERLSLFDPLTGSSFGPVPRYTIYPKTHYVTPRERILNAIEKIKQELAERRQFLLENNKLLEEQRITQRTQFDIEMMNELGYCSGIENYSRYLSGRNEGEPPPTLFDYMPSDALLIIDESHVTVPQIGGMYRGDRSRKETLVEYGFRLPSALDNRPLRFEEFERLAPQTIYVSATPGPYELEKSGGEIIDQVVRPTGLLDPEIEIRPVAIQVDDLLSEARQRADQNERVLVTTLTKKMAEDLTDYLDEHGIRVRYLHSDIDTVERVEIIRDLRLGEFDVLVGINLLREGLDIPEVSLVAILDADKEGFLRSERSLIQTIGRAARNLKGKAILYADRITNSMQKAITETNRRREKQMKYNEARGIVPQALNKKVGELLDIGQGANQKAKANRNAKKVAEPTALYVVPQTAKEYQQQIKKLEQQMYKYAQDLEFEKAAAVRDQLQQLREHFFEVQ</sequence>
<reference key="1">
    <citation type="journal article" date="2001" name="Proc. Natl. Acad. Sci. U.S.A.">
        <title>Complete genomic sequence of Pasteurella multocida Pm70.</title>
        <authorList>
            <person name="May B.J."/>
            <person name="Zhang Q."/>
            <person name="Li L.L."/>
            <person name="Paustian M.L."/>
            <person name="Whittam T.S."/>
            <person name="Kapur V."/>
        </authorList>
    </citation>
    <scope>NUCLEOTIDE SEQUENCE [LARGE SCALE GENOMIC DNA]</scope>
    <source>
        <strain>Pm70</strain>
    </source>
</reference>
<accession>P57844</accession>
<feature type="chain" id="PRO_0000138417" description="UvrABC system protein B">
    <location>
        <begin position="1"/>
        <end position="678"/>
    </location>
</feature>
<feature type="domain" description="Helicase ATP-binding" evidence="1">
    <location>
        <begin position="31"/>
        <end position="417"/>
    </location>
</feature>
<feature type="domain" description="Helicase C-terminal" evidence="1">
    <location>
        <begin position="436"/>
        <end position="589"/>
    </location>
</feature>
<feature type="domain" description="UVR" evidence="1">
    <location>
        <begin position="638"/>
        <end position="673"/>
    </location>
</feature>
<feature type="short sequence motif" description="Beta-hairpin">
    <location>
        <begin position="97"/>
        <end position="120"/>
    </location>
</feature>
<feature type="binding site" evidence="1">
    <location>
        <begin position="44"/>
        <end position="51"/>
    </location>
    <ligand>
        <name>ATP</name>
        <dbReference type="ChEBI" id="CHEBI:30616"/>
    </ligand>
</feature>
<organism>
    <name type="scientific">Pasteurella multocida (strain Pm70)</name>
    <dbReference type="NCBI Taxonomy" id="272843"/>
    <lineage>
        <taxon>Bacteria</taxon>
        <taxon>Pseudomonadati</taxon>
        <taxon>Pseudomonadota</taxon>
        <taxon>Gammaproteobacteria</taxon>
        <taxon>Pasteurellales</taxon>
        <taxon>Pasteurellaceae</taxon>
        <taxon>Pasteurella</taxon>
    </lineage>
</organism>
<comment type="function">
    <text evidence="1">The UvrABC repair system catalyzes the recognition and processing of DNA lesions. A damage recognition complex composed of 2 UvrA and 2 UvrB subunits scans DNA for abnormalities. Upon binding of the UvrA(2)B(2) complex to a putative damaged site, the DNA wraps around one UvrB monomer. DNA wrap is dependent on ATP binding by UvrB and probably causes local melting of the DNA helix, facilitating insertion of UvrB beta-hairpin between the DNA strands. Then UvrB probes one DNA strand for the presence of a lesion. If a lesion is found the UvrA subunits dissociate and the UvrB-DNA preincision complex is formed. This complex is subsequently bound by UvrC and the second UvrB is released. If no lesion is found, the DNA wraps around the other UvrB subunit that will check the other stand for damage.</text>
</comment>
<comment type="subunit">
    <text evidence="1">Forms a heterotetramer with UvrA during the search for lesions. Interacts with UvrC in an incision complex.</text>
</comment>
<comment type="subcellular location">
    <subcellularLocation>
        <location evidence="1">Cytoplasm</location>
    </subcellularLocation>
</comment>
<comment type="domain">
    <text evidence="1">The beta-hairpin motif is involved in DNA binding.</text>
</comment>
<comment type="similarity">
    <text evidence="1">Belongs to the UvrB family.</text>
</comment>
<gene>
    <name evidence="1" type="primary">uvrB</name>
    <name type="ordered locus">PM0429</name>
</gene>
<keyword id="KW-0067">ATP-binding</keyword>
<keyword id="KW-0963">Cytoplasm</keyword>
<keyword id="KW-0227">DNA damage</keyword>
<keyword id="KW-0228">DNA excision</keyword>
<keyword id="KW-0234">DNA repair</keyword>
<keyword id="KW-0267">Excision nuclease</keyword>
<keyword id="KW-0547">Nucleotide-binding</keyword>
<keyword id="KW-1185">Reference proteome</keyword>
<keyword id="KW-0742">SOS response</keyword>
<protein>
    <recommendedName>
        <fullName evidence="1">UvrABC system protein B</fullName>
        <shortName evidence="1">Protein UvrB</shortName>
    </recommendedName>
    <alternativeName>
        <fullName evidence="1">Excinuclease ABC subunit B</fullName>
    </alternativeName>
</protein>
<dbReference type="EMBL" id="AE004439">
    <property type="protein sequence ID" value="AAK02513.1"/>
    <property type="molecule type" value="Genomic_DNA"/>
</dbReference>
<dbReference type="RefSeq" id="WP_010906640.1">
    <property type="nucleotide sequence ID" value="NC_002663.1"/>
</dbReference>
<dbReference type="SMR" id="P57844"/>
<dbReference type="STRING" id="272843.PM0429"/>
<dbReference type="EnsemblBacteria" id="AAK02513">
    <property type="protein sequence ID" value="AAK02513"/>
    <property type="gene ID" value="PM0429"/>
</dbReference>
<dbReference type="KEGG" id="pmu:PM0429"/>
<dbReference type="PATRIC" id="fig|272843.6.peg.441"/>
<dbReference type="HOGENOM" id="CLU_009621_2_1_6"/>
<dbReference type="OrthoDB" id="9806651at2"/>
<dbReference type="Proteomes" id="UP000000809">
    <property type="component" value="Chromosome"/>
</dbReference>
<dbReference type="GO" id="GO:0005737">
    <property type="term" value="C:cytoplasm"/>
    <property type="evidence" value="ECO:0007669"/>
    <property type="project" value="UniProtKB-SubCell"/>
</dbReference>
<dbReference type="GO" id="GO:0009380">
    <property type="term" value="C:excinuclease repair complex"/>
    <property type="evidence" value="ECO:0007669"/>
    <property type="project" value="InterPro"/>
</dbReference>
<dbReference type="GO" id="GO:0005524">
    <property type="term" value="F:ATP binding"/>
    <property type="evidence" value="ECO:0007669"/>
    <property type="project" value="UniProtKB-UniRule"/>
</dbReference>
<dbReference type="GO" id="GO:0016887">
    <property type="term" value="F:ATP hydrolysis activity"/>
    <property type="evidence" value="ECO:0007669"/>
    <property type="project" value="InterPro"/>
</dbReference>
<dbReference type="GO" id="GO:0003677">
    <property type="term" value="F:DNA binding"/>
    <property type="evidence" value="ECO:0007669"/>
    <property type="project" value="UniProtKB-UniRule"/>
</dbReference>
<dbReference type="GO" id="GO:0009381">
    <property type="term" value="F:excinuclease ABC activity"/>
    <property type="evidence" value="ECO:0007669"/>
    <property type="project" value="UniProtKB-UniRule"/>
</dbReference>
<dbReference type="GO" id="GO:0006289">
    <property type="term" value="P:nucleotide-excision repair"/>
    <property type="evidence" value="ECO:0007669"/>
    <property type="project" value="UniProtKB-UniRule"/>
</dbReference>
<dbReference type="GO" id="GO:0009432">
    <property type="term" value="P:SOS response"/>
    <property type="evidence" value="ECO:0007669"/>
    <property type="project" value="UniProtKB-UniRule"/>
</dbReference>
<dbReference type="CDD" id="cd17916">
    <property type="entry name" value="DEXHc_UvrB"/>
    <property type="match status" value="1"/>
</dbReference>
<dbReference type="CDD" id="cd18790">
    <property type="entry name" value="SF2_C_UvrB"/>
    <property type="match status" value="1"/>
</dbReference>
<dbReference type="FunFam" id="3.40.50.300:FF:000257">
    <property type="entry name" value="UvrABC system protein B"/>
    <property type="match status" value="1"/>
</dbReference>
<dbReference type="FunFam" id="3.40.50.300:FF:000477">
    <property type="entry name" value="UvrABC system protein B"/>
    <property type="match status" value="1"/>
</dbReference>
<dbReference type="Gene3D" id="3.40.50.300">
    <property type="entry name" value="P-loop containing nucleotide triphosphate hydrolases"/>
    <property type="match status" value="3"/>
</dbReference>
<dbReference type="Gene3D" id="4.10.860.10">
    <property type="entry name" value="UVR domain"/>
    <property type="match status" value="1"/>
</dbReference>
<dbReference type="HAMAP" id="MF_00204">
    <property type="entry name" value="UvrB"/>
    <property type="match status" value="1"/>
</dbReference>
<dbReference type="InterPro" id="IPR006935">
    <property type="entry name" value="Helicase/UvrB_N"/>
</dbReference>
<dbReference type="InterPro" id="IPR014001">
    <property type="entry name" value="Helicase_ATP-bd"/>
</dbReference>
<dbReference type="InterPro" id="IPR001650">
    <property type="entry name" value="Helicase_C-like"/>
</dbReference>
<dbReference type="InterPro" id="IPR027417">
    <property type="entry name" value="P-loop_NTPase"/>
</dbReference>
<dbReference type="InterPro" id="IPR001943">
    <property type="entry name" value="UVR_dom"/>
</dbReference>
<dbReference type="InterPro" id="IPR036876">
    <property type="entry name" value="UVR_dom_sf"/>
</dbReference>
<dbReference type="InterPro" id="IPR004807">
    <property type="entry name" value="UvrB"/>
</dbReference>
<dbReference type="InterPro" id="IPR041471">
    <property type="entry name" value="UvrB_inter"/>
</dbReference>
<dbReference type="InterPro" id="IPR024759">
    <property type="entry name" value="UvrB_YAD/RRR_dom"/>
</dbReference>
<dbReference type="NCBIfam" id="NF003673">
    <property type="entry name" value="PRK05298.1"/>
    <property type="match status" value="1"/>
</dbReference>
<dbReference type="NCBIfam" id="TIGR00631">
    <property type="entry name" value="uvrb"/>
    <property type="match status" value="1"/>
</dbReference>
<dbReference type="PANTHER" id="PTHR24029">
    <property type="entry name" value="UVRABC SYSTEM PROTEIN B"/>
    <property type="match status" value="1"/>
</dbReference>
<dbReference type="PANTHER" id="PTHR24029:SF0">
    <property type="entry name" value="UVRABC SYSTEM PROTEIN B"/>
    <property type="match status" value="1"/>
</dbReference>
<dbReference type="Pfam" id="PF00271">
    <property type="entry name" value="Helicase_C"/>
    <property type="match status" value="1"/>
</dbReference>
<dbReference type="Pfam" id="PF04851">
    <property type="entry name" value="ResIII"/>
    <property type="match status" value="1"/>
</dbReference>
<dbReference type="Pfam" id="PF02151">
    <property type="entry name" value="UVR"/>
    <property type="match status" value="1"/>
</dbReference>
<dbReference type="Pfam" id="PF12344">
    <property type="entry name" value="UvrB"/>
    <property type="match status" value="1"/>
</dbReference>
<dbReference type="Pfam" id="PF17757">
    <property type="entry name" value="UvrB_inter"/>
    <property type="match status" value="1"/>
</dbReference>
<dbReference type="SMART" id="SM00487">
    <property type="entry name" value="DEXDc"/>
    <property type="match status" value="1"/>
</dbReference>
<dbReference type="SMART" id="SM00490">
    <property type="entry name" value="HELICc"/>
    <property type="match status" value="1"/>
</dbReference>
<dbReference type="SUPFAM" id="SSF46600">
    <property type="entry name" value="C-terminal UvrC-binding domain of UvrB"/>
    <property type="match status" value="1"/>
</dbReference>
<dbReference type="SUPFAM" id="SSF52540">
    <property type="entry name" value="P-loop containing nucleoside triphosphate hydrolases"/>
    <property type="match status" value="2"/>
</dbReference>
<dbReference type="PROSITE" id="PS51192">
    <property type="entry name" value="HELICASE_ATP_BIND_1"/>
    <property type="match status" value="1"/>
</dbReference>
<dbReference type="PROSITE" id="PS51194">
    <property type="entry name" value="HELICASE_CTER"/>
    <property type="match status" value="1"/>
</dbReference>
<dbReference type="PROSITE" id="PS50151">
    <property type="entry name" value="UVR"/>
    <property type="match status" value="1"/>
</dbReference>